<sequence length="438" mass="48308">MVKNVTVIGGGLAGSEAAWQLAKRGIEVDLYEMRPKKNTPAHETANFAELVCTNSMRSNQLSNAVGLLKEEMRQLDSLIMKAADETAVPAGGALAVDRDKFSAVVTKTLKDLPNVHVHEEEITEIPKDGITIIATGPLTSDTLAEQIKEFCGTDSLHFFDAAAPIVAASSINRDIVYKKSRYDKGEAAYLNCPMTKEEFYNFYKNLVGAETATLHGFEDKNVFEGCMPIEVMAKRGEKTMLFGPLKPVGLEDPKTGKTPYAVVQLRQDNAASTMYNIVGFQTHLKYGEQKRVFSMIPGLENAKFVRYGKMHRNTYIASPEVLNANYEARKQTGLFFAGQMTGVEGYVESAGSGLVAGINAAREALGEETLFFPKSTALGSMANYITTTSAKHFQPMNASYALLPKLDYKVRNKQERHLEISKRALKDLEAFKEEKKLD</sequence>
<feature type="chain" id="PRO_0000117247" description="Methylenetetrahydrofolate--tRNA-(uracil-5-)-methyltransferase TrmFO">
    <location>
        <begin position="1"/>
        <end position="438"/>
    </location>
</feature>
<feature type="binding site" evidence="1">
    <location>
        <begin position="9"/>
        <end position="14"/>
    </location>
    <ligand>
        <name>FAD</name>
        <dbReference type="ChEBI" id="CHEBI:57692"/>
    </ligand>
</feature>
<protein>
    <recommendedName>
        <fullName evidence="1">Methylenetetrahydrofolate--tRNA-(uracil-5-)-methyltransferase TrmFO</fullName>
        <ecNumber evidence="1">2.1.1.74</ecNumber>
    </recommendedName>
    <alternativeName>
        <fullName evidence="1">Folate-dependent tRNA (uracil-5-)-methyltransferase</fullName>
    </alternativeName>
    <alternativeName>
        <fullName evidence="1">Folate-dependent tRNA(M-5-U54)-methyltransferase</fullName>
    </alternativeName>
</protein>
<dbReference type="EC" id="2.1.1.74" evidence="1"/>
<dbReference type="EMBL" id="AE017198">
    <property type="protein sequence ID" value="AAS08931.1"/>
    <property type="molecule type" value="Genomic_DNA"/>
</dbReference>
<dbReference type="RefSeq" id="WP_011161949.1">
    <property type="nucleotide sequence ID" value="NC_005362.1"/>
</dbReference>
<dbReference type="SMR" id="Q74JJ8"/>
<dbReference type="KEGG" id="ljo:LJ_1109"/>
<dbReference type="PATRIC" id="fig|257314.6.peg.970"/>
<dbReference type="eggNOG" id="COG1206">
    <property type="taxonomic scope" value="Bacteria"/>
</dbReference>
<dbReference type="HOGENOM" id="CLU_033057_1_0_9"/>
<dbReference type="Proteomes" id="UP000000581">
    <property type="component" value="Chromosome"/>
</dbReference>
<dbReference type="GO" id="GO:0005829">
    <property type="term" value="C:cytosol"/>
    <property type="evidence" value="ECO:0007669"/>
    <property type="project" value="TreeGrafter"/>
</dbReference>
<dbReference type="GO" id="GO:0050660">
    <property type="term" value="F:flavin adenine dinucleotide binding"/>
    <property type="evidence" value="ECO:0007669"/>
    <property type="project" value="UniProtKB-UniRule"/>
</dbReference>
<dbReference type="GO" id="GO:0047151">
    <property type="term" value="F:tRNA (uracil(54)-C5)-methyltransferase activity, 5,10-methylenetetrahydrofolate-dependent"/>
    <property type="evidence" value="ECO:0007669"/>
    <property type="project" value="UniProtKB-UniRule"/>
</dbReference>
<dbReference type="GO" id="GO:0030488">
    <property type="term" value="P:tRNA methylation"/>
    <property type="evidence" value="ECO:0007669"/>
    <property type="project" value="TreeGrafter"/>
</dbReference>
<dbReference type="GO" id="GO:0002098">
    <property type="term" value="P:tRNA wobble uridine modification"/>
    <property type="evidence" value="ECO:0007669"/>
    <property type="project" value="TreeGrafter"/>
</dbReference>
<dbReference type="FunFam" id="3.50.50.60:FF:000035">
    <property type="entry name" value="Methylenetetrahydrofolate--tRNA-(uracil-5-)-methyltransferase TrmFO"/>
    <property type="match status" value="1"/>
</dbReference>
<dbReference type="FunFam" id="3.50.50.60:FF:000040">
    <property type="entry name" value="Methylenetetrahydrofolate--tRNA-(uracil-5-)-methyltransferase TrmFO"/>
    <property type="match status" value="1"/>
</dbReference>
<dbReference type="Gene3D" id="3.50.50.60">
    <property type="entry name" value="FAD/NAD(P)-binding domain"/>
    <property type="match status" value="2"/>
</dbReference>
<dbReference type="HAMAP" id="MF_01037">
    <property type="entry name" value="TrmFO"/>
    <property type="match status" value="1"/>
</dbReference>
<dbReference type="InterPro" id="IPR036188">
    <property type="entry name" value="FAD/NAD-bd_sf"/>
</dbReference>
<dbReference type="InterPro" id="IPR002218">
    <property type="entry name" value="MnmG-rel"/>
</dbReference>
<dbReference type="InterPro" id="IPR020595">
    <property type="entry name" value="MnmG-rel_CS"/>
</dbReference>
<dbReference type="InterPro" id="IPR040131">
    <property type="entry name" value="MnmG_N"/>
</dbReference>
<dbReference type="InterPro" id="IPR004417">
    <property type="entry name" value="TrmFO"/>
</dbReference>
<dbReference type="NCBIfam" id="TIGR00137">
    <property type="entry name" value="gid_trmFO"/>
    <property type="match status" value="1"/>
</dbReference>
<dbReference type="NCBIfam" id="NF003739">
    <property type="entry name" value="PRK05335.1"/>
    <property type="match status" value="1"/>
</dbReference>
<dbReference type="PANTHER" id="PTHR11806">
    <property type="entry name" value="GLUCOSE INHIBITED DIVISION PROTEIN A"/>
    <property type="match status" value="1"/>
</dbReference>
<dbReference type="PANTHER" id="PTHR11806:SF2">
    <property type="entry name" value="METHYLENETETRAHYDROFOLATE--TRNA-(URACIL-5-)-METHYLTRANSFERASE TRMFO"/>
    <property type="match status" value="1"/>
</dbReference>
<dbReference type="Pfam" id="PF01134">
    <property type="entry name" value="GIDA"/>
    <property type="match status" value="1"/>
</dbReference>
<dbReference type="SUPFAM" id="SSF51905">
    <property type="entry name" value="FAD/NAD(P)-binding domain"/>
    <property type="match status" value="1"/>
</dbReference>
<dbReference type="PROSITE" id="PS01281">
    <property type="entry name" value="GIDA_2"/>
    <property type="match status" value="1"/>
</dbReference>
<proteinExistence type="inferred from homology"/>
<reference key="1">
    <citation type="journal article" date="2004" name="Proc. Natl. Acad. Sci. U.S.A.">
        <title>The genome sequence of the probiotic intestinal bacterium Lactobacillus johnsonii NCC 533.</title>
        <authorList>
            <person name="Pridmore R.D."/>
            <person name="Berger B."/>
            <person name="Desiere F."/>
            <person name="Vilanova D."/>
            <person name="Barretto C."/>
            <person name="Pittet A.-C."/>
            <person name="Zwahlen M.-C."/>
            <person name="Rouvet M."/>
            <person name="Altermann E."/>
            <person name="Barrangou R."/>
            <person name="Mollet B."/>
            <person name="Mercenier A."/>
            <person name="Klaenhammer T."/>
            <person name="Arigoni F."/>
            <person name="Schell M.A."/>
        </authorList>
    </citation>
    <scope>NUCLEOTIDE SEQUENCE [LARGE SCALE GENOMIC DNA]</scope>
    <source>
        <strain>CNCM I-1225 / La1 / NCC 533</strain>
    </source>
</reference>
<evidence type="ECO:0000255" key="1">
    <source>
        <dbReference type="HAMAP-Rule" id="MF_01037"/>
    </source>
</evidence>
<keyword id="KW-0963">Cytoplasm</keyword>
<keyword id="KW-0274">FAD</keyword>
<keyword id="KW-0285">Flavoprotein</keyword>
<keyword id="KW-0489">Methyltransferase</keyword>
<keyword id="KW-0520">NAD</keyword>
<keyword id="KW-0521">NADP</keyword>
<keyword id="KW-0808">Transferase</keyword>
<keyword id="KW-0819">tRNA processing</keyword>
<gene>
    <name evidence="1" type="primary">trmFO</name>
    <name type="synonym">gid</name>
    <name type="ordered locus">LJ_1109</name>
</gene>
<accession>Q74JJ8</accession>
<comment type="function">
    <text evidence="1">Catalyzes the folate-dependent formation of 5-methyl-uridine at position 54 (M-5-U54) in all tRNAs.</text>
</comment>
<comment type="catalytic activity">
    <reaction evidence="1">
        <text>uridine(54) in tRNA + (6R)-5,10-methylene-5,6,7,8-tetrahydrofolate + NADH + H(+) = 5-methyluridine(54) in tRNA + (6S)-5,6,7,8-tetrahydrofolate + NAD(+)</text>
        <dbReference type="Rhea" id="RHEA:16873"/>
        <dbReference type="Rhea" id="RHEA-COMP:10167"/>
        <dbReference type="Rhea" id="RHEA-COMP:10193"/>
        <dbReference type="ChEBI" id="CHEBI:15378"/>
        <dbReference type="ChEBI" id="CHEBI:15636"/>
        <dbReference type="ChEBI" id="CHEBI:57453"/>
        <dbReference type="ChEBI" id="CHEBI:57540"/>
        <dbReference type="ChEBI" id="CHEBI:57945"/>
        <dbReference type="ChEBI" id="CHEBI:65315"/>
        <dbReference type="ChEBI" id="CHEBI:74447"/>
        <dbReference type="EC" id="2.1.1.74"/>
    </reaction>
</comment>
<comment type="catalytic activity">
    <reaction evidence="1">
        <text>uridine(54) in tRNA + (6R)-5,10-methylene-5,6,7,8-tetrahydrofolate + NADPH + H(+) = 5-methyluridine(54) in tRNA + (6S)-5,6,7,8-tetrahydrofolate + NADP(+)</text>
        <dbReference type="Rhea" id="RHEA:62372"/>
        <dbReference type="Rhea" id="RHEA-COMP:10167"/>
        <dbReference type="Rhea" id="RHEA-COMP:10193"/>
        <dbReference type="ChEBI" id="CHEBI:15378"/>
        <dbReference type="ChEBI" id="CHEBI:15636"/>
        <dbReference type="ChEBI" id="CHEBI:57453"/>
        <dbReference type="ChEBI" id="CHEBI:57783"/>
        <dbReference type="ChEBI" id="CHEBI:58349"/>
        <dbReference type="ChEBI" id="CHEBI:65315"/>
        <dbReference type="ChEBI" id="CHEBI:74447"/>
        <dbReference type="EC" id="2.1.1.74"/>
    </reaction>
</comment>
<comment type="cofactor">
    <cofactor evidence="1">
        <name>FAD</name>
        <dbReference type="ChEBI" id="CHEBI:57692"/>
    </cofactor>
</comment>
<comment type="subcellular location">
    <subcellularLocation>
        <location evidence="1">Cytoplasm</location>
    </subcellularLocation>
</comment>
<comment type="similarity">
    <text evidence="1">Belongs to the MnmG family. TrmFO subfamily.</text>
</comment>
<name>TRMFO_LACJO</name>
<organism>
    <name type="scientific">Lactobacillus johnsonii (strain CNCM I-12250 / La1 / NCC 533)</name>
    <dbReference type="NCBI Taxonomy" id="257314"/>
    <lineage>
        <taxon>Bacteria</taxon>
        <taxon>Bacillati</taxon>
        <taxon>Bacillota</taxon>
        <taxon>Bacilli</taxon>
        <taxon>Lactobacillales</taxon>
        <taxon>Lactobacillaceae</taxon>
        <taxon>Lactobacillus</taxon>
    </lineage>
</organism>